<evidence type="ECO:0000255" key="1">
    <source>
        <dbReference type="HAMAP-Rule" id="MF_00823"/>
    </source>
</evidence>
<evidence type="ECO:0000255" key="2">
    <source>
        <dbReference type="PROSITE-ProRule" id="PRU01137"/>
    </source>
</evidence>
<keyword id="KW-0067">ATP-binding</keyword>
<keyword id="KW-0963">Cytoplasm</keyword>
<keyword id="KW-0275">Fatty acid biosynthesis</keyword>
<keyword id="KW-0276">Fatty acid metabolism</keyword>
<keyword id="KW-0444">Lipid biosynthesis</keyword>
<keyword id="KW-0443">Lipid metabolism</keyword>
<keyword id="KW-0547">Nucleotide-binding</keyword>
<keyword id="KW-1185">Reference proteome</keyword>
<keyword id="KW-0808">Transferase</keyword>
<dbReference type="EC" id="2.1.3.15" evidence="1"/>
<dbReference type="EMBL" id="CP000304">
    <property type="protein sequence ID" value="ABP79238.1"/>
    <property type="molecule type" value="Genomic_DNA"/>
</dbReference>
<dbReference type="RefSeq" id="WP_011912716.1">
    <property type="nucleotide sequence ID" value="NC_009434.1"/>
</dbReference>
<dbReference type="SMR" id="A4VJT7"/>
<dbReference type="KEGG" id="psa:PST_1553"/>
<dbReference type="eggNOG" id="COG0825">
    <property type="taxonomic scope" value="Bacteria"/>
</dbReference>
<dbReference type="HOGENOM" id="CLU_015486_0_2_6"/>
<dbReference type="UniPathway" id="UPA00655">
    <property type="reaction ID" value="UER00711"/>
</dbReference>
<dbReference type="Proteomes" id="UP000000233">
    <property type="component" value="Chromosome"/>
</dbReference>
<dbReference type="GO" id="GO:0009317">
    <property type="term" value="C:acetyl-CoA carboxylase complex"/>
    <property type="evidence" value="ECO:0007669"/>
    <property type="project" value="InterPro"/>
</dbReference>
<dbReference type="GO" id="GO:0003989">
    <property type="term" value="F:acetyl-CoA carboxylase activity"/>
    <property type="evidence" value="ECO:0007669"/>
    <property type="project" value="InterPro"/>
</dbReference>
<dbReference type="GO" id="GO:0005524">
    <property type="term" value="F:ATP binding"/>
    <property type="evidence" value="ECO:0007669"/>
    <property type="project" value="UniProtKB-KW"/>
</dbReference>
<dbReference type="GO" id="GO:0016743">
    <property type="term" value="F:carboxyl- or carbamoyltransferase activity"/>
    <property type="evidence" value="ECO:0007669"/>
    <property type="project" value="UniProtKB-UniRule"/>
</dbReference>
<dbReference type="GO" id="GO:0006633">
    <property type="term" value="P:fatty acid biosynthetic process"/>
    <property type="evidence" value="ECO:0007669"/>
    <property type="project" value="UniProtKB-KW"/>
</dbReference>
<dbReference type="GO" id="GO:2001295">
    <property type="term" value="P:malonyl-CoA biosynthetic process"/>
    <property type="evidence" value="ECO:0007669"/>
    <property type="project" value="UniProtKB-UniRule"/>
</dbReference>
<dbReference type="FunFam" id="3.90.226.10:FF:000008">
    <property type="entry name" value="Acetyl-coenzyme A carboxylase carboxyl transferase subunit alpha"/>
    <property type="match status" value="1"/>
</dbReference>
<dbReference type="Gene3D" id="3.90.226.10">
    <property type="entry name" value="2-enoyl-CoA Hydratase, Chain A, domain 1"/>
    <property type="match status" value="1"/>
</dbReference>
<dbReference type="HAMAP" id="MF_00823">
    <property type="entry name" value="AcetylCoA_CT_alpha"/>
    <property type="match status" value="1"/>
</dbReference>
<dbReference type="InterPro" id="IPR001095">
    <property type="entry name" value="Acetyl_CoA_COase_a_su"/>
</dbReference>
<dbReference type="InterPro" id="IPR029045">
    <property type="entry name" value="ClpP/crotonase-like_dom_sf"/>
</dbReference>
<dbReference type="InterPro" id="IPR011763">
    <property type="entry name" value="COA_CT_C"/>
</dbReference>
<dbReference type="NCBIfam" id="TIGR00513">
    <property type="entry name" value="accA"/>
    <property type="match status" value="1"/>
</dbReference>
<dbReference type="NCBIfam" id="NF041504">
    <property type="entry name" value="AccA_sub"/>
    <property type="match status" value="1"/>
</dbReference>
<dbReference type="NCBIfam" id="NF004344">
    <property type="entry name" value="PRK05724.1"/>
    <property type="match status" value="1"/>
</dbReference>
<dbReference type="PANTHER" id="PTHR42853">
    <property type="entry name" value="ACETYL-COENZYME A CARBOXYLASE CARBOXYL TRANSFERASE SUBUNIT ALPHA"/>
    <property type="match status" value="1"/>
</dbReference>
<dbReference type="PANTHER" id="PTHR42853:SF3">
    <property type="entry name" value="ACETYL-COENZYME A CARBOXYLASE CARBOXYL TRANSFERASE SUBUNIT ALPHA, CHLOROPLASTIC"/>
    <property type="match status" value="1"/>
</dbReference>
<dbReference type="Pfam" id="PF03255">
    <property type="entry name" value="ACCA"/>
    <property type="match status" value="1"/>
</dbReference>
<dbReference type="PRINTS" id="PR01069">
    <property type="entry name" value="ACCCTRFRASEA"/>
</dbReference>
<dbReference type="SUPFAM" id="SSF52096">
    <property type="entry name" value="ClpP/crotonase"/>
    <property type="match status" value="1"/>
</dbReference>
<dbReference type="PROSITE" id="PS50989">
    <property type="entry name" value="COA_CT_CTER"/>
    <property type="match status" value="1"/>
</dbReference>
<comment type="function">
    <text evidence="1">Component of the acetyl coenzyme A carboxylase (ACC) complex. First, biotin carboxylase catalyzes the carboxylation of biotin on its carrier protein (BCCP) and then the CO(2) group is transferred by the carboxyltransferase to acetyl-CoA to form malonyl-CoA.</text>
</comment>
<comment type="catalytic activity">
    <reaction evidence="1">
        <text>N(6)-carboxybiotinyl-L-lysyl-[protein] + acetyl-CoA = N(6)-biotinyl-L-lysyl-[protein] + malonyl-CoA</text>
        <dbReference type="Rhea" id="RHEA:54728"/>
        <dbReference type="Rhea" id="RHEA-COMP:10505"/>
        <dbReference type="Rhea" id="RHEA-COMP:10506"/>
        <dbReference type="ChEBI" id="CHEBI:57288"/>
        <dbReference type="ChEBI" id="CHEBI:57384"/>
        <dbReference type="ChEBI" id="CHEBI:83144"/>
        <dbReference type="ChEBI" id="CHEBI:83145"/>
        <dbReference type="EC" id="2.1.3.15"/>
    </reaction>
</comment>
<comment type="pathway">
    <text evidence="1">Lipid metabolism; malonyl-CoA biosynthesis; malonyl-CoA from acetyl-CoA: step 1/1.</text>
</comment>
<comment type="subunit">
    <text evidence="1">Acetyl-CoA carboxylase is a heterohexamer composed of biotin carboxyl carrier protein (AccB), biotin carboxylase (AccC) and two subunits each of ACCase subunit alpha (AccA) and ACCase subunit beta (AccD).</text>
</comment>
<comment type="subcellular location">
    <subcellularLocation>
        <location evidence="1">Cytoplasm</location>
    </subcellularLocation>
</comment>
<comment type="similarity">
    <text evidence="1">Belongs to the AccA family.</text>
</comment>
<organism>
    <name type="scientific">Stutzerimonas stutzeri (strain A1501)</name>
    <name type="common">Pseudomonas stutzeri</name>
    <dbReference type="NCBI Taxonomy" id="379731"/>
    <lineage>
        <taxon>Bacteria</taxon>
        <taxon>Pseudomonadati</taxon>
        <taxon>Pseudomonadota</taxon>
        <taxon>Gammaproteobacteria</taxon>
        <taxon>Pseudomonadales</taxon>
        <taxon>Pseudomonadaceae</taxon>
        <taxon>Stutzerimonas</taxon>
    </lineage>
</organism>
<name>ACCA_STUS1</name>
<protein>
    <recommendedName>
        <fullName evidence="1">Acetyl-coenzyme A carboxylase carboxyl transferase subunit alpha</fullName>
        <shortName evidence="1">ACCase subunit alpha</shortName>
        <shortName evidence="1">Acetyl-CoA carboxylase carboxyltransferase subunit alpha</shortName>
        <ecNumber evidence="1">2.1.3.15</ecNumber>
    </recommendedName>
</protein>
<feature type="chain" id="PRO_1000062659" description="Acetyl-coenzyme A carboxylase carboxyl transferase subunit alpha">
    <location>
        <begin position="1"/>
        <end position="316"/>
    </location>
</feature>
<feature type="domain" description="CoA carboxyltransferase C-terminal" evidence="2">
    <location>
        <begin position="39"/>
        <end position="293"/>
    </location>
</feature>
<reference key="1">
    <citation type="journal article" date="2008" name="Proc. Natl. Acad. Sci. U.S.A.">
        <title>Nitrogen fixation island and rhizosphere competence traits in the genome of root-associated Pseudomonas stutzeri A1501.</title>
        <authorList>
            <person name="Yan Y."/>
            <person name="Yang J."/>
            <person name="Dou Y."/>
            <person name="Chen M."/>
            <person name="Ping S."/>
            <person name="Peng J."/>
            <person name="Lu W."/>
            <person name="Zhang W."/>
            <person name="Yao Z."/>
            <person name="Li H."/>
            <person name="Liu W."/>
            <person name="He S."/>
            <person name="Geng L."/>
            <person name="Zhang X."/>
            <person name="Yang F."/>
            <person name="Yu H."/>
            <person name="Zhan Y."/>
            <person name="Li D."/>
            <person name="Lin Z."/>
            <person name="Wang Y."/>
            <person name="Elmerich C."/>
            <person name="Lin M."/>
            <person name="Jin Q."/>
        </authorList>
    </citation>
    <scope>NUCLEOTIDE SEQUENCE [LARGE SCALE GENOMIC DNA]</scope>
    <source>
        <strain>A1501</strain>
    </source>
</reference>
<accession>A4VJT7</accession>
<gene>
    <name evidence="1" type="primary">accA</name>
    <name type="ordered locus">PST_1553</name>
</gene>
<sequence>MNPNFLDFEQPIADLQAKIEELRLVGNDNSLNIGDEIARLQDKSESLTEGIFGNLTSWQIARLARHPQRPYTLDYINHLFTEFEELHGDRHFSDDAAIVGGTARLDGQPVMVIGHQKGREVREKVRRNFGMPRPEGYRKACRLMEMAERFKMPILTFIDTPGAYPGIDAEERNQSEAIAWNLRVMARLKTPIIATVIGEGGSGGALAIGVCDQLNMLQYSTYAVISPEGCASILWRTAEKAPEAAEAMGVTAERLKDLGIVDKVIPEPLGGAHRNPAVMAAAMREQLNSQLHMLKSLDTDALLARRYERLMSYGIA</sequence>
<proteinExistence type="inferred from homology"/>